<feature type="chain" id="PRO_0000078668" description="Luminal-binding protein 3">
    <location>
        <begin position="1" status="less than"/>
        <end position="168"/>
    </location>
</feature>
<feature type="region of interest" description="Disordered" evidence="3">
    <location>
        <begin position="148"/>
        <end position="168"/>
    </location>
</feature>
<feature type="short sequence motif" description="Prevents secretion from ER" evidence="2">
    <location>
        <begin position="165"/>
        <end position="168"/>
    </location>
</feature>
<feature type="glycosylation site" description="N-linked (GlcNAc...) asparagine" evidence="1">
    <location>
        <position position="120"/>
    </location>
</feature>
<feature type="non-terminal residue">
    <location>
        <position position="1"/>
    </location>
</feature>
<evidence type="ECO:0000255" key="1"/>
<evidence type="ECO:0000255" key="2">
    <source>
        <dbReference type="PROSITE-ProRule" id="PRU10138"/>
    </source>
</evidence>
<evidence type="ECO:0000256" key="3">
    <source>
        <dbReference type="SAM" id="MobiDB-lite"/>
    </source>
</evidence>
<evidence type="ECO:0000305" key="4"/>
<gene>
    <name type="primary">BIP3</name>
</gene>
<organism>
    <name type="scientific">Nicotiana tabacum</name>
    <name type="common">Common tobacco</name>
    <dbReference type="NCBI Taxonomy" id="4097"/>
    <lineage>
        <taxon>Eukaryota</taxon>
        <taxon>Viridiplantae</taxon>
        <taxon>Streptophyta</taxon>
        <taxon>Embryophyta</taxon>
        <taxon>Tracheophyta</taxon>
        <taxon>Spermatophyta</taxon>
        <taxon>Magnoliopsida</taxon>
        <taxon>eudicotyledons</taxon>
        <taxon>Gunneridae</taxon>
        <taxon>Pentapetalae</taxon>
        <taxon>asterids</taxon>
        <taxon>lamiids</taxon>
        <taxon>Solanales</taxon>
        <taxon>Solanaceae</taxon>
        <taxon>Nicotianoideae</taxon>
        <taxon>Nicotianeae</taxon>
        <taxon>Nicotiana</taxon>
    </lineage>
</organism>
<protein>
    <recommendedName>
        <fullName>Luminal-binding protein 3</fullName>
        <shortName>BiP 3</shortName>
    </recommendedName>
    <alternativeName>
        <fullName>78 kDa glucose-regulated protein homolog 3</fullName>
        <shortName>GRP-78-3</shortName>
    </alternativeName>
</protein>
<keyword id="KW-0067">ATP-binding</keyword>
<keyword id="KW-0256">Endoplasmic reticulum</keyword>
<keyword id="KW-0325">Glycoprotein</keyword>
<keyword id="KW-0547">Nucleotide-binding</keyword>
<keyword id="KW-1185">Reference proteome</keyword>
<dbReference type="EMBL" id="X60061">
    <property type="protein sequence ID" value="CAA42663.1"/>
    <property type="molecule type" value="mRNA"/>
</dbReference>
<dbReference type="PIR" id="PQ0263">
    <property type="entry name" value="PQ0263"/>
</dbReference>
<dbReference type="SMR" id="Q03683"/>
<dbReference type="STRING" id="4097.Q03683"/>
<dbReference type="GlyCosmos" id="Q03683">
    <property type="glycosylation" value="1 site, No reported glycans"/>
</dbReference>
<dbReference type="PaxDb" id="4097-Q03683"/>
<dbReference type="Proteomes" id="UP000084051">
    <property type="component" value="Unplaced"/>
</dbReference>
<dbReference type="GO" id="GO:0005788">
    <property type="term" value="C:endoplasmic reticulum lumen"/>
    <property type="evidence" value="ECO:0007669"/>
    <property type="project" value="UniProtKB-SubCell"/>
</dbReference>
<dbReference type="GO" id="GO:0005524">
    <property type="term" value="F:ATP binding"/>
    <property type="evidence" value="ECO:0007669"/>
    <property type="project" value="UniProtKB-KW"/>
</dbReference>
<dbReference type="GO" id="GO:0140662">
    <property type="term" value="F:ATP-dependent protein folding chaperone"/>
    <property type="evidence" value="ECO:0007669"/>
    <property type="project" value="InterPro"/>
</dbReference>
<dbReference type="FunFam" id="1.20.1270.10:FF:000015">
    <property type="entry name" value="Luminal-binding protein 5"/>
    <property type="match status" value="1"/>
</dbReference>
<dbReference type="FunFam" id="2.60.34.10:FF:000056">
    <property type="entry name" value="Protein CBG18239"/>
    <property type="match status" value="1"/>
</dbReference>
<dbReference type="Gene3D" id="1.20.1270.10">
    <property type="match status" value="1"/>
</dbReference>
<dbReference type="Gene3D" id="2.60.34.10">
    <property type="entry name" value="Substrate Binding Domain Of DNAk, Chain A, domain 1"/>
    <property type="match status" value="1"/>
</dbReference>
<dbReference type="InterPro" id="IPR029048">
    <property type="entry name" value="HSP70_C_sf"/>
</dbReference>
<dbReference type="InterPro" id="IPR029047">
    <property type="entry name" value="HSP70_peptide-bd_sf"/>
</dbReference>
<dbReference type="InterPro" id="IPR013126">
    <property type="entry name" value="Hsp_70_fam"/>
</dbReference>
<dbReference type="PANTHER" id="PTHR19375">
    <property type="entry name" value="HEAT SHOCK PROTEIN 70KDA"/>
    <property type="match status" value="1"/>
</dbReference>
<dbReference type="Pfam" id="PF00012">
    <property type="entry name" value="HSP70"/>
    <property type="match status" value="1"/>
</dbReference>
<dbReference type="SUPFAM" id="SSF100934">
    <property type="entry name" value="Heat shock protein 70kD (HSP70), C-terminal subdomain"/>
    <property type="match status" value="1"/>
</dbReference>
<dbReference type="SUPFAM" id="SSF100920">
    <property type="entry name" value="Heat shock protein 70kD (HSP70), peptide-binding domain"/>
    <property type="match status" value="1"/>
</dbReference>
<dbReference type="PROSITE" id="PS00014">
    <property type="entry name" value="ER_TARGET"/>
    <property type="match status" value="1"/>
</dbReference>
<reference key="1">
    <citation type="journal article" date="1991" name="Plant Cell">
        <title>The tobacco luminal binding protein is encoded by a multigene family.</title>
        <authorList>
            <person name="Denecke J."/>
            <person name="Goldman M.H."/>
            <person name="Demolder J."/>
            <person name="Seurinck J."/>
            <person name="Botterman J."/>
        </authorList>
    </citation>
    <scope>NUCLEOTIDE SEQUENCE [MRNA]</scope>
</reference>
<reference key="2">
    <citation type="journal article" date="1991" name="Plant Cell">
        <authorList>
            <person name="Denecke J."/>
            <person name="Goldman M.H."/>
            <person name="Demolder J."/>
            <person name="Seurinck J."/>
            <person name="Botterman J."/>
        </authorList>
    </citation>
    <scope>ERRATUM OF PUBMED:1822990</scope>
</reference>
<sequence length="168" mass="18839">PAPRGTPQIEVTFEVDANGILNVKAEDKGTGKSEKITITNDKGRLSQEEIERMVREAEEFAEEDKKVKERIDARNGLETYVYNMKNQINDKDKLADKLESDEKEKIETAVKEALEWLDDNQSAEKEDYEEKLKEVEAVCNPIITAVYQRSGGASGGSSSSEEDGHDEL</sequence>
<comment type="function">
    <text>Probably plays a role in facilitating the assembly of multimeric protein complexes inside the ER.</text>
</comment>
<comment type="subcellular location">
    <subcellularLocation>
        <location>Endoplasmic reticulum lumen</location>
    </subcellularLocation>
</comment>
<comment type="similarity">
    <text evidence="4">Belongs to the heat shock protein 70 family.</text>
</comment>
<accession>Q03683</accession>
<proteinExistence type="evidence at transcript level"/>
<name>BIP3_TOBAC</name>